<dbReference type="EMBL" id="X52404">
    <property type="protein sequence ID" value="CAA36651.1"/>
    <property type="molecule type" value="Genomic_DNA"/>
</dbReference>
<accession>P17829</accession>
<feature type="chain" id="PRO_0000087244" description="Fimbrial assembly protein, serogroup B1">
    <location>
        <begin position="1"/>
        <end position="30" status="greater than"/>
    </location>
</feature>
<feature type="non-terminal residue">
    <location>
        <position position="30"/>
    </location>
</feature>
<organism>
    <name type="scientific">Dichelobacter nodosus</name>
    <name type="common">Bacteroides nodosus</name>
    <dbReference type="NCBI Taxonomy" id="870"/>
    <lineage>
        <taxon>Bacteria</taxon>
        <taxon>Pseudomonadati</taxon>
        <taxon>Pseudomonadota</taxon>
        <taxon>Gammaproteobacteria</taxon>
        <taxon>Cardiobacteriales</taxon>
        <taxon>Cardiobacteriaceae</taxon>
        <taxon>Dichelobacter</taxon>
    </lineage>
</organism>
<proteinExistence type="predicted"/>
<sequence>MNKQRFLFAAKISGIHFLLSLTVAALLAGL</sequence>
<protein>
    <recommendedName>
        <fullName>Fimbrial assembly protein, serogroup B1</fullName>
    </recommendedName>
</protein>
<reference key="1">
    <citation type="journal article" date="1991" name="Mol. Microbiol.">
        <title>Organization of the fimbrial gene region of Bacteroides nodosus: class I and class II strains.</title>
        <authorList>
            <person name="Hobbs M."/>
            <person name="Dalrymple B.P."/>
            <person name="Cox P.T."/>
            <person name="Livingstone S.P."/>
            <person name="Delaney S.F."/>
            <person name="Mattick J.S."/>
        </authorList>
    </citation>
    <scope>NUCLEOTIDE SEQUENCE [GENOMIC DNA]</scope>
    <source>
        <strain>Serogroup B1 isolate VCS1006</strain>
    </source>
</reference>
<keyword id="KW-1029">Fimbrium biogenesis</keyword>
<gene>
    <name type="primary">fimB</name>
</gene>
<name>FIMBB_DICNO</name>